<evidence type="ECO:0000255" key="1">
    <source>
        <dbReference type="HAMAP-Rule" id="MF_00218"/>
    </source>
</evidence>
<reference key="1">
    <citation type="submission" date="2004-11" db="EMBL/GenBank/DDBJ databases">
        <title>Complete genome sequence of Thermus thermophilus HB8.</title>
        <authorList>
            <person name="Masui R."/>
            <person name="Kurokawa K."/>
            <person name="Nakagawa N."/>
            <person name="Tokunaga F."/>
            <person name="Koyama Y."/>
            <person name="Shibata T."/>
            <person name="Oshima T."/>
            <person name="Yokoyama S."/>
            <person name="Yasunaga T."/>
            <person name="Kuramitsu S."/>
        </authorList>
    </citation>
    <scope>NUCLEOTIDE SEQUENCE [LARGE SCALE GENOMIC DNA]</scope>
    <source>
        <strain>ATCC 27634 / DSM 579 / HB8</strain>
    </source>
</reference>
<sequence>MDLVNDLILRAARGEPTPRPPVWFMRQAGRYQKAYRKLRERYTLPEIVQNPEVCAEVTLLPVKALGVDAAILFADITTPLYGMGVDLSLVENKGPVIHNPVRDEKGVEALRPLVPEEAVPFVLETIRILKRELPVPLIGFAGAPFTLASYLVEGGPSRRFLRVKALMYGEEALWHRLMEKLTEAMARYLRAQAEAGADLLQVFDSWVGALSPADYRRYVKPHMERLFQSLRPVGVPVIHFGVGTMGLLEDMKEAGGDVLGLDHHTPLPWARALLGATPVQGNLDPAVLLAPKGVIRREVQRILKENGGKSGHIFNLGHGIVPETPEENVRYVVELIQEVAA</sequence>
<proteinExistence type="inferred from homology"/>
<keyword id="KW-0963">Cytoplasm</keyword>
<keyword id="KW-0210">Decarboxylase</keyword>
<keyword id="KW-0456">Lyase</keyword>
<keyword id="KW-0627">Porphyrin biosynthesis</keyword>
<keyword id="KW-1185">Reference proteome</keyword>
<feature type="chain" id="PRO_0000325705" description="Uroporphyrinogen decarboxylase">
    <location>
        <begin position="1"/>
        <end position="341"/>
    </location>
</feature>
<feature type="binding site" evidence="1">
    <location>
        <begin position="26"/>
        <end position="30"/>
    </location>
    <ligand>
        <name>substrate</name>
    </ligand>
</feature>
<feature type="binding site" evidence="1">
    <location>
        <position position="75"/>
    </location>
    <ligand>
        <name>substrate</name>
    </ligand>
</feature>
<feature type="binding site" evidence="1">
    <location>
        <position position="150"/>
    </location>
    <ligand>
        <name>substrate</name>
    </ligand>
</feature>
<feature type="binding site" evidence="1">
    <location>
        <position position="205"/>
    </location>
    <ligand>
        <name>substrate</name>
    </ligand>
</feature>
<feature type="binding site" evidence="1">
    <location>
        <position position="318"/>
    </location>
    <ligand>
        <name>substrate</name>
    </ligand>
</feature>
<feature type="site" description="Transition state stabilizer" evidence="1">
    <location>
        <position position="75"/>
    </location>
</feature>
<name>DCUP_THET8</name>
<dbReference type="EC" id="4.1.1.37" evidence="1"/>
<dbReference type="EMBL" id="AP008226">
    <property type="protein sequence ID" value="BAD70424.1"/>
    <property type="molecule type" value="Genomic_DNA"/>
</dbReference>
<dbReference type="RefSeq" id="WP_011228059.1">
    <property type="nucleotide sequence ID" value="NC_006461.1"/>
</dbReference>
<dbReference type="RefSeq" id="YP_143867.1">
    <property type="nucleotide sequence ID" value="NC_006461.1"/>
</dbReference>
<dbReference type="SMR" id="Q5SKP2"/>
<dbReference type="EnsemblBacteria" id="BAD70424">
    <property type="protein sequence ID" value="BAD70424"/>
    <property type="gene ID" value="BAD70424"/>
</dbReference>
<dbReference type="GeneID" id="3168994"/>
<dbReference type="KEGG" id="ttj:TTHA0601"/>
<dbReference type="PATRIC" id="fig|300852.9.peg.599"/>
<dbReference type="eggNOG" id="COG0407">
    <property type="taxonomic scope" value="Bacteria"/>
</dbReference>
<dbReference type="HOGENOM" id="CLU_040933_0_1_0"/>
<dbReference type="PhylomeDB" id="Q5SKP2"/>
<dbReference type="UniPathway" id="UPA00251">
    <property type="reaction ID" value="UER00321"/>
</dbReference>
<dbReference type="Proteomes" id="UP000000532">
    <property type="component" value="Chromosome"/>
</dbReference>
<dbReference type="GO" id="GO:0005829">
    <property type="term" value="C:cytosol"/>
    <property type="evidence" value="ECO:0007669"/>
    <property type="project" value="TreeGrafter"/>
</dbReference>
<dbReference type="GO" id="GO:0004853">
    <property type="term" value="F:uroporphyrinogen decarboxylase activity"/>
    <property type="evidence" value="ECO:0007669"/>
    <property type="project" value="UniProtKB-UniRule"/>
</dbReference>
<dbReference type="GO" id="GO:0006782">
    <property type="term" value="P:protoporphyrinogen IX biosynthetic process"/>
    <property type="evidence" value="ECO:0007669"/>
    <property type="project" value="UniProtKB-UniRule"/>
</dbReference>
<dbReference type="CDD" id="cd00717">
    <property type="entry name" value="URO-D"/>
    <property type="match status" value="1"/>
</dbReference>
<dbReference type="Gene3D" id="3.20.20.210">
    <property type="match status" value="1"/>
</dbReference>
<dbReference type="HAMAP" id="MF_00218">
    <property type="entry name" value="URO_D"/>
    <property type="match status" value="1"/>
</dbReference>
<dbReference type="InterPro" id="IPR038071">
    <property type="entry name" value="UROD/MetE-like_sf"/>
</dbReference>
<dbReference type="InterPro" id="IPR006361">
    <property type="entry name" value="Uroporphyrinogen_deCO2ase_HemE"/>
</dbReference>
<dbReference type="InterPro" id="IPR000257">
    <property type="entry name" value="Uroporphyrinogen_deCOase"/>
</dbReference>
<dbReference type="NCBIfam" id="TIGR01464">
    <property type="entry name" value="hemE"/>
    <property type="match status" value="1"/>
</dbReference>
<dbReference type="PANTHER" id="PTHR21091">
    <property type="entry name" value="METHYLTETRAHYDROFOLATE:HOMOCYSTEINE METHYLTRANSFERASE RELATED"/>
    <property type="match status" value="1"/>
</dbReference>
<dbReference type="PANTHER" id="PTHR21091:SF169">
    <property type="entry name" value="UROPORPHYRINOGEN DECARBOXYLASE"/>
    <property type="match status" value="1"/>
</dbReference>
<dbReference type="Pfam" id="PF01208">
    <property type="entry name" value="URO-D"/>
    <property type="match status" value="1"/>
</dbReference>
<dbReference type="SUPFAM" id="SSF51726">
    <property type="entry name" value="UROD/MetE-like"/>
    <property type="match status" value="1"/>
</dbReference>
<dbReference type="PROSITE" id="PS00906">
    <property type="entry name" value="UROD_1"/>
    <property type="match status" value="1"/>
</dbReference>
<dbReference type="PROSITE" id="PS00907">
    <property type="entry name" value="UROD_2"/>
    <property type="match status" value="1"/>
</dbReference>
<accession>Q5SKP2</accession>
<comment type="function">
    <text evidence="1">Catalyzes the decarboxylation of four acetate groups of uroporphyrinogen-III to yield coproporphyrinogen-III.</text>
</comment>
<comment type="catalytic activity">
    <reaction evidence="1">
        <text>uroporphyrinogen III + 4 H(+) = coproporphyrinogen III + 4 CO2</text>
        <dbReference type="Rhea" id="RHEA:19865"/>
        <dbReference type="ChEBI" id="CHEBI:15378"/>
        <dbReference type="ChEBI" id="CHEBI:16526"/>
        <dbReference type="ChEBI" id="CHEBI:57308"/>
        <dbReference type="ChEBI" id="CHEBI:57309"/>
        <dbReference type="EC" id="4.1.1.37"/>
    </reaction>
</comment>
<comment type="pathway">
    <text evidence="1">Porphyrin-containing compound metabolism; protoporphyrin-IX biosynthesis; coproporphyrinogen-III from 5-aminolevulinate: step 4/4.</text>
</comment>
<comment type="subunit">
    <text evidence="1">Homodimer.</text>
</comment>
<comment type="subcellular location">
    <subcellularLocation>
        <location evidence="1">Cytoplasm</location>
    </subcellularLocation>
</comment>
<comment type="similarity">
    <text evidence="1">Belongs to the uroporphyrinogen decarboxylase family.</text>
</comment>
<protein>
    <recommendedName>
        <fullName evidence="1">Uroporphyrinogen decarboxylase</fullName>
        <shortName evidence="1">UPD</shortName>
        <shortName evidence="1">URO-D</shortName>
        <ecNumber evidence="1">4.1.1.37</ecNumber>
    </recommendedName>
</protein>
<organism>
    <name type="scientific">Thermus thermophilus (strain ATCC 27634 / DSM 579 / HB8)</name>
    <dbReference type="NCBI Taxonomy" id="300852"/>
    <lineage>
        <taxon>Bacteria</taxon>
        <taxon>Thermotogati</taxon>
        <taxon>Deinococcota</taxon>
        <taxon>Deinococci</taxon>
        <taxon>Thermales</taxon>
        <taxon>Thermaceae</taxon>
        <taxon>Thermus</taxon>
    </lineage>
</organism>
<gene>
    <name evidence="1" type="primary">hemE</name>
    <name type="ordered locus">TTHA0601</name>
</gene>